<keyword id="KW-0067">ATP-binding</keyword>
<keyword id="KW-0238">DNA-binding</keyword>
<keyword id="KW-0479">Metal-binding</keyword>
<keyword id="KW-0547">Nucleotide-binding</keyword>
<keyword id="KW-0678">Repressor</keyword>
<keyword id="KW-0804">Transcription</keyword>
<keyword id="KW-0805">Transcription regulation</keyword>
<keyword id="KW-0862">Zinc</keyword>
<keyword id="KW-0863">Zinc-finger</keyword>
<reference key="1">
    <citation type="submission" date="2006-06" db="EMBL/GenBank/DDBJ databases">
        <title>Complete sequence of Pseudoalteromonas atlantica T6c.</title>
        <authorList>
            <consortium name="US DOE Joint Genome Institute"/>
            <person name="Copeland A."/>
            <person name="Lucas S."/>
            <person name="Lapidus A."/>
            <person name="Barry K."/>
            <person name="Detter J.C."/>
            <person name="Glavina del Rio T."/>
            <person name="Hammon N."/>
            <person name="Israni S."/>
            <person name="Dalin E."/>
            <person name="Tice H."/>
            <person name="Pitluck S."/>
            <person name="Saunders E."/>
            <person name="Brettin T."/>
            <person name="Bruce D."/>
            <person name="Han C."/>
            <person name="Tapia R."/>
            <person name="Gilna P."/>
            <person name="Schmutz J."/>
            <person name="Larimer F."/>
            <person name="Land M."/>
            <person name="Hauser L."/>
            <person name="Kyrpides N."/>
            <person name="Kim E."/>
            <person name="Karls A.C."/>
            <person name="Bartlett D."/>
            <person name="Higgins B.P."/>
            <person name="Richardson P."/>
        </authorList>
    </citation>
    <scope>NUCLEOTIDE SEQUENCE [LARGE SCALE GENOMIC DNA]</scope>
    <source>
        <strain>T6c / ATCC BAA-1087</strain>
    </source>
</reference>
<protein>
    <recommendedName>
        <fullName evidence="1">Transcriptional repressor NrdR</fullName>
    </recommendedName>
</protein>
<name>NRDR_PSEA6</name>
<proteinExistence type="inferred from homology"/>
<dbReference type="EMBL" id="CP000388">
    <property type="protein sequence ID" value="ABG39836.1"/>
    <property type="molecule type" value="Genomic_DNA"/>
</dbReference>
<dbReference type="RefSeq" id="WP_006992170.1">
    <property type="nucleotide sequence ID" value="NC_008228.1"/>
</dbReference>
<dbReference type="SMR" id="Q15WA2"/>
<dbReference type="STRING" id="342610.Patl_1310"/>
<dbReference type="KEGG" id="pat:Patl_1310"/>
<dbReference type="eggNOG" id="COG1327">
    <property type="taxonomic scope" value="Bacteria"/>
</dbReference>
<dbReference type="HOGENOM" id="CLU_108412_0_0_6"/>
<dbReference type="OrthoDB" id="9807461at2"/>
<dbReference type="Proteomes" id="UP000001981">
    <property type="component" value="Chromosome"/>
</dbReference>
<dbReference type="GO" id="GO:0005524">
    <property type="term" value="F:ATP binding"/>
    <property type="evidence" value="ECO:0007669"/>
    <property type="project" value="UniProtKB-KW"/>
</dbReference>
<dbReference type="GO" id="GO:0003677">
    <property type="term" value="F:DNA binding"/>
    <property type="evidence" value="ECO:0007669"/>
    <property type="project" value="UniProtKB-KW"/>
</dbReference>
<dbReference type="GO" id="GO:0008270">
    <property type="term" value="F:zinc ion binding"/>
    <property type="evidence" value="ECO:0007669"/>
    <property type="project" value="UniProtKB-UniRule"/>
</dbReference>
<dbReference type="GO" id="GO:0045892">
    <property type="term" value="P:negative regulation of DNA-templated transcription"/>
    <property type="evidence" value="ECO:0007669"/>
    <property type="project" value="UniProtKB-UniRule"/>
</dbReference>
<dbReference type="HAMAP" id="MF_00440">
    <property type="entry name" value="NrdR"/>
    <property type="match status" value="1"/>
</dbReference>
<dbReference type="InterPro" id="IPR005144">
    <property type="entry name" value="ATP-cone_dom"/>
</dbReference>
<dbReference type="InterPro" id="IPR055173">
    <property type="entry name" value="NrdR-like_N"/>
</dbReference>
<dbReference type="InterPro" id="IPR003796">
    <property type="entry name" value="RNR_NrdR-like"/>
</dbReference>
<dbReference type="NCBIfam" id="TIGR00244">
    <property type="entry name" value="transcriptional regulator NrdR"/>
    <property type="match status" value="1"/>
</dbReference>
<dbReference type="PANTHER" id="PTHR30455">
    <property type="entry name" value="TRANSCRIPTIONAL REPRESSOR NRDR"/>
    <property type="match status" value="1"/>
</dbReference>
<dbReference type="PANTHER" id="PTHR30455:SF2">
    <property type="entry name" value="TRANSCRIPTIONAL REPRESSOR NRDR"/>
    <property type="match status" value="1"/>
</dbReference>
<dbReference type="Pfam" id="PF03477">
    <property type="entry name" value="ATP-cone"/>
    <property type="match status" value="1"/>
</dbReference>
<dbReference type="Pfam" id="PF22811">
    <property type="entry name" value="Zn_ribbon_NrdR"/>
    <property type="match status" value="1"/>
</dbReference>
<dbReference type="PROSITE" id="PS51161">
    <property type="entry name" value="ATP_CONE"/>
    <property type="match status" value="1"/>
</dbReference>
<organism>
    <name type="scientific">Pseudoalteromonas atlantica (strain T6c / ATCC BAA-1087)</name>
    <dbReference type="NCBI Taxonomy" id="3042615"/>
    <lineage>
        <taxon>Bacteria</taxon>
        <taxon>Pseudomonadati</taxon>
        <taxon>Pseudomonadota</taxon>
        <taxon>Gammaproteobacteria</taxon>
        <taxon>Alteromonadales</taxon>
        <taxon>Alteromonadaceae</taxon>
        <taxon>Paraglaciecola</taxon>
    </lineage>
</organism>
<sequence>MFCPFCSIQETKVIDSRLVADGHQVRRRRECTMCKERFTTFEMAELVMPRVVKRDGSREPFNEDKLRAGLQRALEKRPVSTEQVEQCISRLKSAMRATGEREITSEYLGNLIMDALKELDKVAYVRFASVYRSFEDIREFGEEIARLGD</sequence>
<gene>
    <name evidence="1" type="primary">nrdR</name>
    <name type="ordered locus">Patl_1310</name>
</gene>
<evidence type="ECO:0000255" key="1">
    <source>
        <dbReference type="HAMAP-Rule" id="MF_00440"/>
    </source>
</evidence>
<comment type="function">
    <text evidence="1">Negatively regulates transcription of bacterial ribonucleotide reductase nrd genes and operons by binding to NrdR-boxes.</text>
</comment>
<comment type="cofactor">
    <cofactor evidence="1">
        <name>Zn(2+)</name>
        <dbReference type="ChEBI" id="CHEBI:29105"/>
    </cofactor>
    <text evidence="1">Binds 1 zinc ion.</text>
</comment>
<comment type="similarity">
    <text evidence="1">Belongs to the NrdR family.</text>
</comment>
<feature type="chain" id="PRO_0000264196" description="Transcriptional repressor NrdR">
    <location>
        <begin position="1"/>
        <end position="149"/>
    </location>
</feature>
<feature type="domain" description="ATP-cone" evidence="1">
    <location>
        <begin position="49"/>
        <end position="139"/>
    </location>
</feature>
<feature type="zinc finger region" evidence="1">
    <location>
        <begin position="3"/>
        <end position="34"/>
    </location>
</feature>
<accession>Q15WA2</accession>